<organism>
    <name type="scientific">Phenylobacterium zucineum (strain HLK1)</name>
    <dbReference type="NCBI Taxonomy" id="450851"/>
    <lineage>
        <taxon>Bacteria</taxon>
        <taxon>Pseudomonadati</taxon>
        <taxon>Pseudomonadota</taxon>
        <taxon>Alphaproteobacteria</taxon>
        <taxon>Caulobacterales</taxon>
        <taxon>Caulobacteraceae</taxon>
        <taxon>Phenylobacterium</taxon>
    </lineage>
</organism>
<protein>
    <recommendedName>
        <fullName evidence="1">Ribosome-recycling factor</fullName>
        <shortName evidence="1">RRF</shortName>
    </recommendedName>
    <alternativeName>
        <fullName evidence="1">Ribosome-releasing factor</fullName>
    </alternativeName>
</protein>
<keyword id="KW-0963">Cytoplasm</keyword>
<keyword id="KW-0648">Protein biosynthesis</keyword>
<keyword id="KW-1185">Reference proteome</keyword>
<reference key="1">
    <citation type="journal article" date="2008" name="BMC Genomics">
        <title>Complete genome of Phenylobacterium zucineum - a novel facultative intracellular bacterium isolated from human erythroleukemia cell line K562.</title>
        <authorList>
            <person name="Luo Y."/>
            <person name="Xu X."/>
            <person name="Ding Z."/>
            <person name="Liu Z."/>
            <person name="Zhang B."/>
            <person name="Yan Z."/>
            <person name="Sun J."/>
            <person name="Hu S."/>
            <person name="Hu X."/>
        </authorList>
    </citation>
    <scope>NUCLEOTIDE SEQUENCE [LARGE SCALE GENOMIC DNA]</scope>
    <source>
        <strain>HLK1</strain>
    </source>
</reference>
<dbReference type="EMBL" id="CP000747">
    <property type="protein sequence ID" value="ACG78188.1"/>
    <property type="molecule type" value="Genomic_DNA"/>
</dbReference>
<dbReference type="RefSeq" id="WP_012522330.1">
    <property type="nucleotide sequence ID" value="NC_011144.1"/>
</dbReference>
<dbReference type="SMR" id="B4RBZ1"/>
<dbReference type="STRING" id="450851.PHZ_c1777"/>
<dbReference type="KEGG" id="pzu:PHZ_c1777"/>
<dbReference type="eggNOG" id="COG0233">
    <property type="taxonomic scope" value="Bacteria"/>
</dbReference>
<dbReference type="HOGENOM" id="CLU_073981_2_0_5"/>
<dbReference type="OrthoDB" id="9804006at2"/>
<dbReference type="Proteomes" id="UP000001868">
    <property type="component" value="Chromosome"/>
</dbReference>
<dbReference type="GO" id="GO:0005829">
    <property type="term" value="C:cytosol"/>
    <property type="evidence" value="ECO:0007669"/>
    <property type="project" value="GOC"/>
</dbReference>
<dbReference type="GO" id="GO:0043023">
    <property type="term" value="F:ribosomal large subunit binding"/>
    <property type="evidence" value="ECO:0007669"/>
    <property type="project" value="TreeGrafter"/>
</dbReference>
<dbReference type="GO" id="GO:0002184">
    <property type="term" value="P:cytoplasmic translational termination"/>
    <property type="evidence" value="ECO:0007669"/>
    <property type="project" value="TreeGrafter"/>
</dbReference>
<dbReference type="CDD" id="cd00520">
    <property type="entry name" value="RRF"/>
    <property type="match status" value="1"/>
</dbReference>
<dbReference type="FunFam" id="1.10.132.20:FF:000001">
    <property type="entry name" value="Ribosome-recycling factor"/>
    <property type="match status" value="1"/>
</dbReference>
<dbReference type="FunFam" id="3.30.1360.40:FF:000001">
    <property type="entry name" value="Ribosome-recycling factor"/>
    <property type="match status" value="1"/>
</dbReference>
<dbReference type="Gene3D" id="3.30.1360.40">
    <property type="match status" value="1"/>
</dbReference>
<dbReference type="Gene3D" id="1.10.132.20">
    <property type="entry name" value="Ribosome-recycling factor"/>
    <property type="match status" value="1"/>
</dbReference>
<dbReference type="HAMAP" id="MF_00040">
    <property type="entry name" value="RRF"/>
    <property type="match status" value="1"/>
</dbReference>
<dbReference type="InterPro" id="IPR002661">
    <property type="entry name" value="Ribosome_recyc_fac"/>
</dbReference>
<dbReference type="InterPro" id="IPR023584">
    <property type="entry name" value="Ribosome_recyc_fac_dom"/>
</dbReference>
<dbReference type="InterPro" id="IPR036191">
    <property type="entry name" value="RRF_sf"/>
</dbReference>
<dbReference type="NCBIfam" id="TIGR00496">
    <property type="entry name" value="frr"/>
    <property type="match status" value="1"/>
</dbReference>
<dbReference type="PANTHER" id="PTHR20982:SF3">
    <property type="entry name" value="MITOCHONDRIAL RIBOSOME RECYCLING FACTOR PSEUDO 1"/>
    <property type="match status" value="1"/>
</dbReference>
<dbReference type="PANTHER" id="PTHR20982">
    <property type="entry name" value="RIBOSOME RECYCLING FACTOR"/>
    <property type="match status" value="1"/>
</dbReference>
<dbReference type="Pfam" id="PF01765">
    <property type="entry name" value="RRF"/>
    <property type="match status" value="1"/>
</dbReference>
<dbReference type="SUPFAM" id="SSF55194">
    <property type="entry name" value="Ribosome recycling factor, RRF"/>
    <property type="match status" value="1"/>
</dbReference>
<proteinExistence type="inferred from homology"/>
<name>RRF_PHEZH</name>
<accession>B4RBZ1</accession>
<feature type="chain" id="PRO_1000090766" description="Ribosome-recycling factor">
    <location>
        <begin position="1"/>
        <end position="188"/>
    </location>
</feature>
<gene>
    <name evidence="1" type="primary">frr</name>
    <name type="ordered locus">PHZ_c1777</name>
</gene>
<evidence type="ECO:0000255" key="1">
    <source>
        <dbReference type="HAMAP-Rule" id="MF_00040"/>
    </source>
</evidence>
<sequence>MATTEKPVLSKYRDRMDKAVAALKEEFGSLRTGRASASLLDQIHVDAYGSSMPLTQVAAVSVPEPRMITVNVWDRGMVVSVEKAIRQSDLGLNPVVDGQTLRIPIPPLTEERRKDLAKIAGRYAEQQRVAVRNIRRDANEDLRKAQKDNVISQDEEKRMETEVQKMTDEAIKRIDEALKTKEQEIMQV</sequence>
<comment type="function">
    <text evidence="1">Responsible for the release of ribosomes from messenger RNA at the termination of protein biosynthesis. May increase the efficiency of translation by recycling ribosomes from one round of translation to another.</text>
</comment>
<comment type="subcellular location">
    <subcellularLocation>
        <location evidence="1">Cytoplasm</location>
    </subcellularLocation>
</comment>
<comment type="similarity">
    <text evidence="1">Belongs to the RRF family.</text>
</comment>